<organism>
    <name type="scientific">Panax ginseng</name>
    <name type="common">Korean ginseng</name>
    <dbReference type="NCBI Taxonomy" id="4054"/>
    <lineage>
        <taxon>Eukaryota</taxon>
        <taxon>Viridiplantae</taxon>
        <taxon>Streptophyta</taxon>
        <taxon>Embryophyta</taxon>
        <taxon>Tracheophyta</taxon>
        <taxon>Spermatophyta</taxon>
        <taxon>Magnoliopsida</taxon>
        <taxon>eudicotyledons</taxon>
        <taxon>Gunneridae</taxon>
        <taxon>Pentapetalae</taxon>
        <taxon>asterids</taxon>
        <taxon>campanulids</taxon>
        <taxon>Apiales</taxon>
        <taxon>Araliaceae</taxon>
        <taxon>Panax</taxon>
    </lineage>
</organism>
<reference key="1">
    <citation type="journal article" date="2011" name="Plant Cell Physiol.">
        <title>The Cyt P450 enzyme CYP716A47 catalyzes the formation of protopanaxadiol from dammarenediol-II during ginsenoside biosynthesis in Panax ginseng.</title>
        <authorList>
            <person name="Han J.Y."/>
            <person name="Kim H.J."/>
            <person name="Kwon Y.S."/>
            <person name="Choi Y.E."/>
        </authorList>
    </citation>
    <scope>NUCLEOTIDE SEQUENCE [MRNA]</scope>
</reference>
<comment type="function">
    <text evidence="1">Probable heme-thiolate monooxygenase.</text>
</comment>
<comment type="cofactor">
    <cofactor evidence="1">
        <name>heme</name>
        <dbReference type="ChEBI" id="CHEBI:30413"/>
    </cofactor>
</comment>
<comment type="subcellular location">
    <subcellularLocation>
        <location evidence="3">Membrane</location>
        <topology evidence="3">Single-pass membrane protein</topology>
    </subcellularLocation>
</comment>
<comment type="similarity">
    <text evidence="3">Belongs to the cytochrome P450 family.</text>
</comment>
<comment type="caution">
    <text evidence="4">Reported as CYP72A219 in the publication but submitted as CYP72A129.</text>
</comment>
<accession>H2DH21</accession>
<keyword id="KW-0349">Heme</keyword>
<keyword id="KW-0408">Iron</keyword>
<keyword id="KW-0472">Membrane</keyword>
<keyword id="KW-0479">Metal-binding</keyword>
<keyword id="KW-0503">Monooxygenase</keyword>
<keyword id="KW-0560">Oxidoreductase</keyword>
<keyword id="KW-0812">Transmembrane</keyword>
<keyword id="KW-1133">Transmembrane helix</keyword>
<dbReference type="EC" id="1.14.-.-"/>
<dbReference type="EMBL" id="JN604542">
    <property type="protein sequence ID" value="AEY75218.1"/>
    <property type="molecule type" value="mRNA"/>
</dbReference>
<dbReference type="SMR" id="H2DH21"/>
<dbReference type="GO" id="GO:0016020">
    <property type="term" value="C:membrane"/>
    <property type="evidence" value="ECO:0007669"/>
    <property type="project" value="UniProtKB-SubCell"/>
</dbReference>
<dbReference type="GO" id="GO:0020037">
    <property type="term" value="F:heme binding"/>
    <property type="evidence" value="ECO:0007669"/>
    <property type="project" value="InterPro"/>
</dbReference>
<dbReference type="GO" id="GO:0005506">
    <property type="term" value="F:iron ion binding"/>
    <property type="evidence" value="ECO:0007669"/>
    <property type="project" value="InterPro"/>
</dbReference>
<dbReference type="GO" id="GO:0004497">
    <property type="term" value="F:monooxygenase activity"/>
    <property type="evidence" value="ECO:0007669"/>
    <property type="project" value="UniProtKB-KW"/>
</dbReference>
<dbReference type="GO" id="GO:0016705">
    <property type="term" value="F:oxidoreductase activity, acting on paired donors, with incorporation or reduction of molecular oxygen"/>
    <property type="evidence" value="ECO:0007669"/>
    <property type="project" value="InterPro"/>
</dbReference>
<dbReference type="CDD" id="cd20642">
    <property type="entry name" value="CYP72"/>
    <property type="match status" value="1"/>
</dbReference>
<dbReference type="FunFam" id="1.10.630.10:FF:000029">
    <property type="entry name" value="Cytochrome P450 734A1"/>
    <property type="match status" value="1"/>
</dbReference>
<dbReference type="Gene3D" id="1.10.630.10">
    <property type="entry name" value="Cytochrome P450"/>
    <property type="match status" value="1"/>
</dbReference>
<dbReference type="InterPro" id="IPR001128">
    <property type="entry name" value="Cyt_P450"/>
</dbReference>
<dbReference type="InterPro" id="IPR017972">
    <property type="entry name" value="Cyt_P450_CS"/>
</dbReference>
<dbReference type="InterPro" id="IPR002401">
    <property type="entry name" value="Cyt_P450_E_grp-I"/>
</dbReference>
<dbReference type="InterPro" id="IPR036396">
    <property type="entry name" value="Cyt_P450_sf"/>
</dbReference>
<dbReference type="InterPro" id="IPR050665">
    <property type="entry name" value="Cytochrome_P450_Monooxygen"/>
</dbReference>
<dbReference type="PANTHER" id="PTHR24282:SF255">
    <property type="entry name" value="CYTOCHROME P450 72A11-RELATED"/>
    <property type="match status" value="1"/>
</dbReference>
<dbReference type="PANTHER" id="PTHR24282">
    <property type="entry name" value="CYTOCHROME P450 FAMILY MEMBER"/>
    <property type="match status" value="1"/>
</dbReference>
<dbReference type="Pfam" id="PF00067">
    <property type="entry name" value="p450"/>
    <property type="match status" value="1"/>
</dbReference>
<dbReference type="PRINTS" id="PR00463">
    <property type="entry name" value="EP450I"/>
</dbReference>
<dbReference type="PRINTS" id="PR00385">
    <property type="entry name" value="P450"/>
</dbReference>
<dbReference type="SUPFAM" id="SSF48264">
    <property type="entry name" value="Cytochrome P450"/>
    <property type="match status" value="1"/>
</dbReference>
<dbReference type="PROSITE" id="PS00086">
    <property type="entry name" value="CYTOCHROME_P450"/>
    <property type="match status" value="1"/>
</dbReference>
<sequence>MELVLKLISSFCAIVVVILLGWRIFNWVWLRPRKLEKYLRNQGFNGNSYRLFFGDVKEMIVMLKEAKSKPINLYDDIIPRIIPLNQKIITNYGKNSFLWLGPKPMVHIMNPDHIKDVLSKFYQFQKPRHNPLTKLLATGVADAEGDRWAKHRKLINPAFHLEKLKNMLPAIYLSSSEIVTKWEEMVSTKGQFELDVLPYLETLTSDVISRTAFGSSYEEGRKIFQLQREQAELIIQASQTIYLPGMRFLPTKRNKRMKEIAKEVKIALKSIINKRLKAMEAGERSSHDDLLGILLESNSKEIKQHGNTNFGLTVDEVIEECKLFFFAGQETTSNLLVWTMILLSQHQDWQKRAKEEVLRTFGNNKPDFDGLNHLKVVNMILLEVLRLYPPILSLDRTIYEEIKLGEISLPAGVILLLPIILLHYDQEIWGDDAKEFNPERFSEGVLKATKGRVTYFPFSWGPRICIGQNFAMLEAKMAMAMILQRFSFVLSPSYAHAPHAIITLQPQYGAHLILHSLI</sequence>
<evidence type="ECO:0000250" key="1"/>
<evidence type="ECO:0000255" key="2"/>
<evidence type="ECO:0000305" key="3"/>
<evidence type="ECO:0000305" key="4">
    <source>
    </source>
</evidence>
<feature type="chain" id="PRO_0000425876" description="Cytochrome P450 CYP72A219">
    <location>
        <begin position="1"/>
        <end position="518"/>
    </location>
</feature>
<feature type="transmembrane region" description="Helical" evidence="2">
    <location>
        <begin position="2"/>
        <end position="22"/>
    </location>
</feature>
<feature type="binding site" description="axial binding residue" evidence="1">
    <location>
        <position position="465"/>
    </location>
    <ligand>
        <name>heme</name>
        <dbReference type="ChEBI" id="CHEBI:30413"/>
    </ligand>
    <ligandPart>
        <name>Fe</name>
        <dbReference type="ChEBI" id="CHEBI:18248"/>
    </ligandPart>
</feature>
<name>C7A29_PANGI</name>
<protein>
    <recommendedName>
        <fullName>Cytochrome P450 CYP72A219</fullName>
        <ecNumber>1.14.-.-</ecNumber>
    </recommendedName>
    <alternativeName>
        <fullName>Cytochrome P450 CYP72A129</fullName>
    </alternativeName>
</protein>
<proteinExistence type="evidence at transcript level"/>